<sequence length="418" mass="43553">MLHPRARTMLLLSLPAVAIGIASSLILIVVMKIASALQNLLWQRLPGTLGIAQDSPLWIIGVLTLTGIAVGLVIRFSQGHAGPDPACEPLIGAPVPPSALPGLIVALILGLAGGVSLGPEHPIMTVNIALAVAIGARLLPRVNRMEWTILASAGTIGALFGTPVAAALIFSQTLNGSSEVPLWDRLFAPLMAAAAGALTTGLFFHPHFSLPITHYGQMEMTDILSGAIVAAIAIAAGMVAVWCLPRLHAMMNQMKNPVLVLGIGGFILGILGVIGGPVSLFKGLDEMQQMVANQAFSTSDYFLLAVIKLAALVVAAASGFRGGRIFPAVFVGVALGLMLHEHVPAVPAAITVSCAILGIVLVVTRDGWLSLFMAAVVVPNTTLLPLLCIVMLPAWLLLAGKPMMMVNRPKQQPPHDNV</sequence>
<dbReference type="EMBL" id="CP000800">
    <property type="protein sequence ID" value="ABV19372.1"/>
    <property type="molecule type" value="Genomic_DNA"/>
</dbReference>
<dbReference type="RefSeq" id="WP_000903111.1">
    <property type="nucleotide sequence ID" value="NC_009801.1"/>
</dbReference>
<dbReference type="SMR" id="A7ZPJ9"/>
<dbReference type="KEGG" id="ecw:EcE24377A_2679"/>
<dbReference type="HOGENOM" id="CLU_053130_0_0_6"/>
<dbReference type="Proteomes" id="UP000001122">
    <property type="component" value="Chromosome"/>
</dbReference>
<dbReference type="GO" id="GO:0005886">
    <property type="term" value="C:plasma membrane"/>
    <property type="evidence" value="ECO:0007669"/>
    <property type="project" value="UniProtKB-SubCell"/>
</dbReference>
<dbReference type="GO" id="GO:0015108">
    <property type="term" value="F:chloride transmembrane transporter activity"/>
    <property type="evidence" value="ECO:0007669"/>
    <property type="project" value="InterPro"/>
</dbReference>
<dbReference type="GO" id="GO:0005216">
    <property type="term" value="F:monoatomic ion channel activity"/>
    <property type="evidence" value="ECO:0007669"/>
    <property type="project" value="UniProtKB-UniRule"/>
</dbReference>
<dbReference type="CDD" id="cd00400">
    <property type="entry name" value="Voltage_gated_ClC"/>
    <property type="match status" value="1"/>
</dbReference>
<dbReference type="FunFam" id="1.10.3080.10:FF:000007">
    <property type="entry name" value="Putative ion-transport protein YfeO"/>
    <property type="match status" value="1"/>
</dbReference>
<dbReference type="Gene3D" id="1.10.3080.10">
    <property type="entry name" value="Clc chloride channel"/>
    <property type="match status" value="1"/>
</dbReference>
<dbReference type="HAMAP" id="MF_01115">
    <property type="entry name" value="CLC_YfeO"/>
    <property type="match status" value="1"/>
</dbReference>
<dbReference type="InterPro" id="IPR022969">
    <property type="entry name" value="Chloride_channel_YfeO"/>
</dbReference>
<dbReference type="InterPro" id="IPR014743">
    <property type="entry name" value="Cl-channel_core"/>
</dbReference>
<dbReference type="InterPro" id="IPR001807">
    <property type="entry name" value="ClC"/>
</dbReference>
<dbReference type="InterPro" id="IPR050368">
    <property type="entry name" value="ClC-type_chloride_channel"/>
</dbReference>
<dbReference type="NCBIfam" id="NF002971">
    <property type="entry name" value="PRK03655.1"/>
    <property type="match status" value="1"/>
</dbReference>
<dbReference type="PANTHER" id="PTHR43427">
    <property type="entry name" value="CHLORIDE CHANNEL PROTEIN CLC-E"/>
    <property type="match status" value="1"/>
</dbReference>
<dbReference type="PANTHER" id="PTHR43427:SF9">
    <property type="entry name" value="ION-TRANSPORT PROTEIN YFEO-RELATED"/>
    <property type="match status" value="1"/>
</dbReference>
<dbReference type="Pfam" id="PF00654">
    <property type="entry name" value="Voltage_CLC"/>
    <property type="match status" value="1"/>
</dbReference>
<dbReference type="PRINTS" id="PR00762">
    <property type="entry name" value="CLCHANNEL"/>
</dbReference>
<dbReference type="SUPFAM" id="SSF81340">
    <property type="entry name" value="Clc chloride channel"/>
    <property type="match status" value="1"/>
</dbReference>
<keyword id="KW-1003">Cell membrane</keyword>
<keyword id="KW-0407">Ion channel</keyword>
<keyword id="KW-0406">Ion transport</keyword>
<keyword id="KW-0472">Membrane</keyword>
<keyword id="KW-1185">Reference proteome</keyword>
<keyword id="KW-0812">Transmembrane</keyword>
<keyword id="KW-1133">Transmembrane helix</keyword>
<keyword id="KW-0813">Transport</keyword>
<protein>
    <recommendedName>
        <fullName evidence="1">Putative ion-transport protein YfeO</fullName>
    </recommendedName>
</protein>
<accession>A7ZPJ9</accession>
<comment type="subcellular location">
    <subcellularLocation>
        <location evidence="1">Cell membrane</location>
        <topology evidence="1">Multi-pass membrane protein</topology>
    </subcellularLocation>
</comment>
<comment type="similarity">
    <text evidence="1">Belongs to the chloride channel (TC 2.A.49) family.</text>
</comment>
<name>YFEO_ECO24</name>
<gene>
    <name evidence="1" type="primary">yfeO</name>
    <name type="ordered locus">EcE24377A_2679</name>
</gene>
<feature type="chain" id="PRO_1000065237" description="Putative ion-transport protein YfeO">
    <location>
        <begin position="1"/>
        <end position="418"/>
    </location>
</feature>
<feature type="transmembrane region" description="Helical" evidence="1">
    <location>
        <begin position="10"/>
        <end position="30"/>
    </location>
</feature>
<feature type="transmembrane region" description="Helical" evidence="1">
    <location>
        <begin position="54"/>
        <end position="74"/>
    </location>
</feature>
<feature type="transmembrane region" description="Helical" evidence="1">
    <location>
        <begin position="99"/>
        <end position="119"/>
    </location>
</feature>
<feature type="transmembrane region" description="Helical" evidence="1">
    <location>
        <begin position="120"/>
        <end position="140"/>
    </location>
</feature>
<feature type="transmembrane region" description="Helical" evidence="1">
    <location>
        <begin position="149"/>
        <end position="169"/>
    </location>
</feature>
<feature type="transmembrane region" description="Helical" evidence="1">
    <location>
        <begin position="186"/>
        <end position="206"/>
    </location>
</feature>
<feature type="transmembrane region" description="Helical" evidence="1">
    <location>
        <begin position="223"/>
        <end position="243"/>
    </location>
</feature>
<feature type="transmembrane region" description="Helical" evidence="1">
    <location>
        <begin position="258"/>
        <end position="278"/>
    </location>
</feature>
<feature type="transmembrane region" description="Helical" evidence="1">
    <location>
        <begin position="300"/>
        <end position="320"/>
    </location>
</feature>
<feature type="transmembrane region" description="Helical" evidence="1">
    <location>
        <begin position="322"/>
        <end position="342"/>
    </location>
</feature>
<feature type="transmembrane region" description="Helical" evidence="1">
    <location>
        <begin position="343"/>
        <end position="363"/>
    </location>
</feature>
<feature type="transmembrane region" description="Helical" evidence="1">
    <location>
        <begin position="371"/>
        <end position="391"/>
    </location>
</feature>
<proteinExistence type="inferred from homology"/>
<organism>
    <name type="scientific">Escherichia coli O139:H28 (strain E24377A / ETEC)</name>
    <dbReference type="NCBI Taxonomy" id="331111"/>
    <lineage>
        <taxon>Bacteria</taxon>
        <taxon>Pseudomonadati</taxon>
        <taxon>Pseudomonadota</taxon>
        <taxon>Gammaproteobacteria</taxon>
        <taxon>Enterobacterales</taxon>
        <taxon>Enterobacteriaceae</taxon>
        <taxon>Escherichia</taxon>
    </lineage>
</organism>
<reference key="1">
    <citation type="journal article" date="2008" name="J. Bacteriol.">
        <title>The pangenome structure of Escherichia coli: comparative genomic analysis of E. coli commensal and pathogenic isolates.</title>
        <authorList>
            <person name="Rasko D.A."/>
            <person name="Rosovitz M.J."/>
            <person name="Myers G.S.A."/>
            <person name="Mongodin E.F."/>
            <person name="Fricke W.F."/>
            <person name="Gajer P."/>
            <person name="Crabtree J."/>
            <person name="Sebaihia M."/>
            <person name="Thomson N.R."/>
            <person name="Chaudhuri R."/>
            <person name="Henderson I.R."/>
            <person name="Sperandio V."/>
            <person name="Ravel J."/>
        </authorList>
    </citation>
    <scope>NUCLEOTIDE SEQUENCE [LARGE SCALE GENOMIC DNA]</scope>
    <source>
        <strain>E24377A / ETEC</strain>
    </source>
</reference>
<evidence type="ECO:0000255" key="1">
    <source>
        <dbReference type="HAMAP-Rule" id="MF_01115"/>
    </source>
</evidence>